<protein>
    <recommendedName>
        <fullName>Fibroblast growth factor 23</fullName>
        <shortName>FGF-23</shortName>
    </recommendedName>
</protein>
<gene>
    <name type="primary">Fgf23</name>
</gene>
<name>FGF23_MOUSE</name>
<reference key="1">
    <citation type="journal article" date="2000" name="Biochem. Biophys. Res. Commun.">
        <title>Identification of a novel fibroblast growth factor, FGF-23, preferentially expressed in the ventrolateral thalamic nucleus of the brain.</title>
        <authorList>
            <person name="Yamashita T."/>
            <person name="Yoshioka M."/>
            <person name="Itoh N."/>
        </authorList>
    </citation>
    <scope>NUCLEOTIDE SEQUENCE [MRNA]</scope>
    <scope>TISSUE SPECIFICITY</scope>
</reference>
<reference key="2">
    <citation type="journal article" date="2000" name="Nat. Genet.">
        <title>Autosomal dominant hypophosphataemic rickets is associated with mutations in FGF23.</title>
        <authorList>
            <person name="White K.E."/>
            <person name="Evans W.E."/>
            <person name="O'Riordan J.L.H."/>
            <person name="Speer M.C."/>
            <person name="Econs M.J."/>
            <person name="Lorenz-Depiereux B."/>
            <person name="Grabowski M."/>
            <person name="Meitinger T."/>
            <person name="Strom T.M."/>
        </authorList>
    </citation>
    <scope>NUCLEOTIDE SEQUENCE [MRNA]</scope>
    <source>
        <strain>BALB/cJ</strain>
        <tissue>Embryo</tissue>
    </source>
</reference>
<reference key="3">
    <citation type="journal article" date="2006" name="Nature">
        <title>Klotho converts canonical FGF receptor into a specific receptor for FGF23.</title>
        <authorList>
            <person name="Urakawa I."/>
            <person name="Yamazaki Y."/>
            <person name="Shimada T."/>
            <person name="Iijima K."/>
            <person name="Hasegawa H."/>
            <person name="Okawa K."/>
            <person name="Fujita T."/>
            <person name="Fukumoto S."/>
            <person name="Yamashita T."/>
        </authorList>
    </citation>
    <scope>FUNCTION</scope>
    <scope>INTERACTION WITH KL AND FGFR1</scope>
</reference>
<accession>Q9EPC2</accession>
<evidence type="ECO:0000250" key="1"/>
<evidence type="ECO:0000250" key="2">
    <source>
        <dbReference type="UniProtKB" id="Q8VI82"/>
    </source>
</evidence>
<evidence type="ECO:0000250" key="3">
    <source>
        <dbReference type="UniProtKB" id="Q9GZV9"/>
    </source>
</evidence>
<evidence type="ECO:0000255" key="4"/>
<evidence type="ECO:0000256" key="5">
    <source>
        <dbReference type="SAM" id="MobiDB-lite"/>
    </source>
</evidence>
<evidence type="ECO:0000269" key="6">
    <source>
    </source>
</evidence>
<evidence type="ECO:0000269" key="7">
    <source>
    </source>
</evidence>
<evidence type="ECO:0000305" key="8"/>
<proteinExistence type="evidence at protein level"/>
<feature type="signal peptide" evidence="4">
    <location>
        <begin position="1"/>
        <end position="24"/>
    </location>
</feature>
<feature type="chain" id="PRO_0000008999" description="Fibroblast growth factor 23">
    <location>
        <begin position="25"/>
        <end position="251"/>
    </location>
</feature>
<feature type="region of interest" description="Disordered" evidence="5">
    <location>
        <begin position="175"/>
        <end position="251"/>
    </location>
</feature>
<feature type="compositionally biased region" description="Basic and acidic residues" evidence="5">
    <location>
        <begin position="179"/>
        <end position="189"/>
    </location>
</feature>
<feature type="modified residue" description="Phosphoserine; by FAM20C" evidence="3">
    <location>
        <position position="180"/>
    </location>
</feature>
<feature type="glycosylation site" description="O-linked (GalNAc) threonine" evidence="3">
    <location>
        <position position="171"/>
    </location>
</feature>
<feature type="glycosylation site" description="O-linked (GalNAc) threonine" evidence="3">
    <location>
        <position position="178"/>
    </location>
</feature>
<feature type="disulfide bond" evidence="1">
    <location>
        <begin position="95"/>
        <end position="113"/>
    </location>
</feature>
<sequence length="251" mass="27758">MLGTCLRLLVGVLCTVCSLGTARAYPDTSPLLGSNWGSLTHLYTATARTSYHLQIHRDGHVDGTPHQTIYSALMITSEDAGSVVITGAMTRRFLCMDLHGNIFGSLHFSPENCKFRQWTLENGYDVYLSQKHHYLVSLGRAKRIFQPGTNPPPFSQFLARRNEVPLLHFYTVRPRRHTRSAEDPPERDPLNVLKPRPRATPVPVSCSRELPSAEEGGPAASDPLGVLRRGRGDARGGAGGADRCRPFPRFV</sequence>
<dbReference type="EMBL" id="AB037889">
    <property type="protein sequence ID" value="BAB13478.1"/>
    <property type="molecule type" value="mRNA"/>
</dbReference>
<dbReference type="EMBL" id="AF263536">
    <property type="protein sequence ID" value="AAG09916.1"/>
    <property type="molecule type" value="mRNA"/>
</dbReference>
<dbReference type="CCDS" id="CCDS20562.1"/>
<dbReference type="PIR" id="JC7513">
    <property type="entry name" value="JC7513"/>
</dbReference>
<dbReference type="RefSeq" id="NP_073148.1">
    <property type="nucleotide sequence ID" value="NM_022657.5"/>
</dbReference>
<dbReference type="SMR" id="Q9EPC2"/>
<dbReference type="BioGRID" id="211090">
    <property type="interactions" value="5"/>
</dbReference>
<dbReference type="FunCoup" id="Q9EPC2">
    <property type="interactions" value="1043"/>
</dbReference>
<dbReference type="STRING" id="10090.ENSMUSP00000000186"/>
<dbReference type="GlyCosmos" id="Q9EPC2">
    <property type="glycosylation" value="1 site, No reported glycans"/>
</dbReference>
<dbReference type="GlyGen" id="Q9EPC2">
    <property type="glycosylation" value="5 sites"/>
</dbReference>
<dbReference type="iPTMnet" id="Q9EPC2"/>
<dbReference type="PhosphoSitePlus" id="Q9EPC2"/>
<dbReference type="PaxDb" id="10090-ENSMUSP00000000186"/>
<dbReference type="Antibodypedia" id="22263">
    <property type="antibodies" value="630 antibodies from 36 providers"/>
</dbReference>
<dbReference type="DNASU" id="64654"/>
<dbReference type="Ensembl" id="ENSMUST00000000186.9">
    <property type="protein sequence ID" value="ENSMUSP00000000186.7"/>
    <property type="gene ID" value="ENSMUSG00000000182.10"/>
</dbReference>
<dbReference type="GeneID" id="64654"/>
<dbReference type="KEGG" id="mmu:64654"/>
<dbReference type="UCSC" id="uc009dvp.2">
    <property type="organism name" value="mouse"/>
</dbReference>
<dbReference type="AGR" id="MGI:1891427"/>
<dbReference type="CTD" id="8074"/>
<dbReference type="MGI" id="MGI:1891427">
    <property type="gene designation" value="Fgf23"/>
</dbReference>
<dbReference type="VEuPathDB" id="HostDB:ENSMUSG00000000182"/>
<dbReference type="eggNOG" id="KOG3885">
    <property type="taxonomic scope" value="Eukaryota"/>
</dbReference>
<dbReference type="GeneTree" id="ENSGT00940000160821"/>
<dbReference type="HOGENOM" id="CLU_094251_0_0_1"/>
<dbReference type="InParanoid" id="Q9EPC2"/>
<dbReference type="OMA" id="PSTHDPW"/>
<dbReference type="OrthoDB" id="8909943at2759"/>
<dbReference type="PhylomeDB" id="Q9EPC2"/>
<dbReference type="TreeFam" id="TF335872"/>
<dbReference type="Reactome" id="R-MMU-109704">
    <property type="pathway name" value="PI3K Cascade"/>
</dbReference>
<dbReference type="Reactome" id="R-MMU-1257604">
    <property type="pathway name" value="PIP3 activates AKT signaling"/>
</dbReference>
<dbReference type="Reactome" id="R-MMU-190322">
    <property type="pathway name" value="FGFR4 ligand binding and activation"/>
</dbReference>
<dbReference type="Reactome" id="R-MMU-190372">
    <property type="pathway name" value="FGFR3c ligand binding and activation"/>
</dbReference>
<dbReference type="Reactome" id="R-MMU-190373">
    <property type="pathway name" value="FGFR1c ligand binding and activation"/>
</dbReference>
<dbReference type="Reactome" id="R-MMU-190374">
    <property type="pathway name" value="FGFR1c and Klotho ligand binding and activation"/>
</dbReference>
<dbReference type="Reactome" id="R-MMU-190375">
    <property type="pathway name" value="FGFR2c ligand binding and activation"/>
</dbReference>
<dbReference type="Reactome" id="R-MMU-381426">
    <property type="pathway name" value="Regulation of Insulin-like Growth Factor (IGF) transport and uptake by Insulin-like Growth Factor Binding Proteins (IGFBPs)"/>
</dbReference>
<dbReference type="Reactome" id="R-MMU-5654219">
    <property type="pathway name" value="Phospholipase C-mediated cascade: FGFR1"/>
</dbReference>
<dbReference type="Reactome" id="R-MMU-5654221">
    <property type="pathway name" value="Phospholipase C-mediated cascade, FGFR2"/>
</dbReference>
<dbReference type="Reactome" id="R-MMU-5654227">
    <property type="pathway name" value="Phospholipase C-mediated cascade, FGFR3"/>
</dbReference>
<dbReference type="Reactome" id="R-MMU-5654228">
    <property type="pathway name" value="Phospholipase C-mediated cascade, FGFR4"/>
</dbReference>
<dbReference type="Reactome" id="R-MMU-5654687">
    <property type="pathway name" value="Downstream signaling of activated FGFR1"/>
</dbReference>
<dbReference type="Reactome" id="R-MMU-5654688">
    <property type="pathway name" value="SHC-mediated cascade:FGFR1"/>
</dbReference>
<dbReference type="Reactome" id="R-MMU-5654689">
    <property type="pathway name" value="PI-3K cascade:FGFR1"/>
</dbReference>
<dbReference type="Reactome" id="R-MMU-5654693">
    <property type="pathway name" value="FRS-mediated FGFR1 signaling"/>
</dbReference>
<dbReference type="Reactome" id="R-MMU-5654695">
    <property type="pathway name" value="PI-3K cascade:FGFR2"/>
</dbReference>
<dbReference type="Reactome" id="R-MMU-5654699">
    <property type="pathway name" value="SHC-mediated cascade:FGFR2"/>
</dbReference>
<dbReference type="Reactome" id="R-MMU-5654700">
    <property type="pathway name" value="FRS-mediated FGFR2 signaling"/>
</dbReference>
<dbReference type="Reactome" id="R-MMU-5654704">
    <property type="pathway name" value="SHC-mediated cascade:FGFR3"/>
</dbReference>
<dbReference type="Reactome" id="R-MMU-5654706">
    <property type="pathway name" value="FRS-mediated FGFR3 signaling"/>
</dbReference>
<dbReference type="Reactome" id="R-MMU-5654710">
    <property type="pathway name" value="PI-3K cascade:FGFR3"/>
</dbReference>
<dbReference type="Reactome" id="R-MMU-5654712">
    <property type="pathway name" value="FRS-mediated FGFR4 signaling"/>
</dbReference>
<dbReference type="Reactome" id="R-MMU-5654719">
    <property type="pathway name" value="SHC-mediated cascade:FGFR4"/>
</dbReference>
<dbReference type="Reactome" id="R-MMU-5654720">
    <property type="pathway name" value="PI-3K cascade:FGFR4"/>
</dbReference>
<dbReference type="Reactome" id="R-MMU-5654726">
    <property type="pathway name" value="Negative regulation of FGFR1 signaling"/>
</dbReference>
<dbReference type="Reactome" id="R-MMU-5654727">
    <property type="pathway name" value="Negative regulation of FGFR2 signaling"/>
</dbReference>
<dbReference type="Reactome" id="R-MMU-5654732">
    <property type="pathway name" value="Negative regulation of FGFR3 signaling"/>
</dbReference>
<dbReference type="Reactome" id="R-MMU-5654733">
    <property type="pathway name" value="Negative regulation of FGFR4 signaling"/>
</dbReference>
<dbReference type="Reactome" id="R-MMU-5658623">
    <property type="pathway name" value="FGFRL1 modulation of FGFR1 signaling"/>
</dbReference>
<dbReference type="Reactome" id="R-MMU-5673001">
    <property type="pathway name" value="RAF/MAP kinase cascade"/>
</dbReference>
<dbReference type="Reactome" id="R-MMU-6811558">
    <property type="pathway name" value="PI5P, PP2A and IER3 Regulate PI3K/AKT Signaling"/>
</dbReference>
<dbReference type="Reactome" id="R-MMU-8957275">
    <property type="pathway name" value="Post-translational protein phosphorylation"/>
</dbReference>
<dbReference type="BioGRID-ORCS" id="64654">
    <property type="hits" value="1 hit in 77 CRISPR screens"/>
</dbReference>
<dbReference type="PRO" id="PR:Q9EPC2"/>
<dbReference type="Proteomes" id="UP000000589">
    <property type="component" value="Chromosome 6"/>
</dbReference>
<dbReference type="RNAct" id="Q9EPC2">
    <property type="molecule type" value="protein"/>
</dbReference>
<dbReference type="Bgee" id="ENSMUSG00000000182">
    <property type="expression patterns" value="Expressed in mesodermal cell in embryo and 11 other cell types or tissues"/>
</dbReference>
<dbReference type="ExpressionAtlas" id="Q9EPC2">
    <property type="expression patterns" value="baseline and differential"/>
</dbReference>
<dbReference type="GO" id="GO:0005615">
    <property type="term" value="C:extracellular space"/>
    <property type="evidence" value="ECO:0000314"/>
    <property type="project" value="MGI"/>
</dbReference>
<dbReference type="GO" id="GO:0005104">
    <property type="term" value="F:fibroblast growth factor receptor binding"/>
    <property type="evidence" value="ECO:0000353"/>
    <property type="project" value="MGI"/>
</dbReference>
<dbReference type="GO" id="GO:0008083">
    <property type="term" value="F:growth factor activity"/>
    <property type="evidence" value="ECO:0007669"/>
    <property type="project" value="UniProtKB-KW"/>
</dbReference>
<dbReference type="GO" id="GO:0005105">
    <property type="term" value="F:type 1 fibroblast growth factor receptor binding"/>
    <property type="evidence" value="ECO:0000353"/>
    <property type="project" value="UniProtKB"/>
</dbReference>
<dbReference type="GO" id="GO:0055074">
    <property type="term" value="P:calcium ion homeostasis"/>
    <property type="evidence" value="ECO:0000314"/>
    <property type="project" value="MGI"/>
</dbReference>
<dbReference type="GO" id="GO:0030154">
    <property type="term" value="P:cell differentiation"/>
    <property type="evidence" value="ECO:0007669"/>
    <property type="project" value="UniProtKB-KW"/>
</dbReference>
<dbReference type="GO" id="GO:0070371">
    <property type="term" value="P:ERK1 and ERK2 cascade"/>
    <property type="evidence" value="ECO:0000314"/>
    <property type="project" value="MGI"/>
</dbReference>
<dbReference type="GO" id="GO:0008543">
    <property type="term" value="P:fibroblast growth factor receptor signaling pathway"/>
    <property type="evidence" value="ECO:0000353"/>
    <property type="project" value="MGI"/>
</dbReference>
<dbReference type="GO" id="GO:0030643">
    <property type="term" value="P:intracellular phosphate ion homeostasis"/>
    <property type="evidence" value="ECO:0000315"/>
    <property type="project" value="MGI"/>
</dbReference>
<dbReference type="GO" id="GO:0000165">
    <property type="term" value="P:MAPK cascade"/>
    <property type="evidence" value="ECO:0000314"/>
    <property type="project" value="MGI"/>
</dbReference>
<dbReference type="GO" id="GO:0030502">
    <property type="term" value="P:negative regulation of bone mineralization"/>
    <property type="evidence" value="ECO:0007669"/>
    <property type="project" value="Ensembl"/>
</dbReference>
<dbReference type="GO" id="GO:0046888">
    <property type="term" value="P:negative regulation of hormone secretion"/>
    <property type="evidence" value="ECO:0000250"/>
    <property type="project" value="UniProtKB"/>
</dbReference>
<dbReference type="GO" id="GO:0045668">
    <property type="term" value="P:negative regulation of osteoblast differentiation"/>
    <property type="evidence" value="ECO:0007669"/>
    <property type="project" value="Ensembl"/>
</dbReference>
<dbReference type="GO" id="GO:0045893">
    <property type="term" value="P:positive regulation of DNA-templated transcription"/>
    <property type="evidence" value="ECO:0000314"/>
    <property type="project" value="UniProtKB"/>
</dbReference>
<dbReference type="GO" id="GO:0070374">
    <property type="term" value="P:positive regulation of ERK1 and ERK2 cascade"/>
    <property type="evidence" value="ECO:0000314"/>
    <property type="project" value="UniProtKB"/>
</dbReference>
<dbReference type="GO" id="GO:0090080">
    <property type="term" value="P:positive regulation of MAPKKK cascade by fibroblast growth factor receptor signaling pathway"/>
    <property type="evidence" value="ECO:0000316"/>
    <property type="project" value="MGI"/>
</dbReference>
<dbReference type="GO" id="GO:0030500">
    <property type="term" value="P:regulation of bone mineralization"/>
    <property type="evidence" value="ECO:0000315"/>
    <property type="project" value="MGI"/>
</dbReference>
<dbReference type="GO" id="GO:0010966">
    <property type="term" value="P:regulation of phosphate transport"/>
    <property type="evidence" value="ECO:0007669"/>
    <property type="project" value="Ensembl"/>
</dbReference>
<dbReference type="GO" id="GO:1904383">
    <property type="term" value="P:response to sodium phosphate"/>
    <property type="evidence" value="ECO:0000314"/>
    <property type="project" value="MGI"/>
</dbReference>
<dbReference type="GO" id="GO:0042369">
    <property type="term" value="P:vitamin D catabolic process"/>
    <property type="evidence" value="ECO:0007669"/>
    <property type="project" value="Ensembl"/>
</dbReference>
<dbReference type="Gene3D" id="2.80.10.50">
    <property type="match status" value="1"/>
</dbReference>
<dbReference type="InterPro" id="IPR002209">
    <property type="entry name" value="Fibroblast_GF_fam"/>
</dbReference>
<dbReference type="InterPro" id="IPR008996">
    <property type="entry name" value="IL1/FGF"/>
</dbReference>
<dbReference type="PANTHER" id="PTHR11486">
    <property type="entry name" value="FIBROBLAST GROWTH FACTOR"/>
    <property type="match status" value="1"/>
</dbReference>
<dbReference type="Pfam" id="PF00167">
    <property type="entry name" value="FGF"/>
    <property type="match status" value="1"/>
</dbReference>
<dbReference type="SMART" id="SM00442">
    <property type="entry name" value="FGF"/>
    <property type="match status" value="1"/>
</dbReference>
<dbReference type="SUPFAM" id="SSF50353">
    <property type="entry name" value="Cytokine"/>
    <property type="match status" value="1"/>
</dbReference>
<dbReference type="PROSITE" id="PS00247">
    <property type="entry name" value="HBGF_FGF"/>
    <property type="match status" value="1"/>
</dbReference>
<organism>
    <name type="scientific">Mus musculus</name>
    <name type="common">Mouse</name>
    <dbReference type="NCBI Taxonomy" id="10090"/>
    <lineage>
        <taxon>Eukaryota</taxon>
        <taxon>Metazoa</taxon>
        <taxon>Chordata</taxon>
        <taxon>Craniata</taxon>
        <taxon>Vertebrata</taxon>
        <taxon>Euteleostomi</taxon>
        <taxon>Mammalia</taxon>
        <taxon>Eutheria</taxon>
        <taxon>Euarchontoglires</taxon>
        <taxon>Glires</taxon>
        <taxon>Rodentia</taxon>
        <taxon>Myomorpha</taxon>
        <taxon>Muroidea</taxon>
        <taxon>Muridae</taxon>
        <taxon>Murinae</taxon>
        <taxon>Mus</taxon>
        <taxon>Mus</taxon>
    </lineage>
</organism>
<keyword id="KW-0221">Differentiation</keyword>
<keyword id="KW-1015">Disulfide bond</keyword>
<keyword id="KW-0325">Glycoprotein</keyword>
<keyword id="KW-0339">Growth factor</keyword>
<keyword id="KW-0597">Phosphoprotein</keyword>
<keyword id="KW-1185">Reference proteome</keyword>
<keyword id="KW-0964">Secreted</keyword>
<keyword id="KW-0732">Signal</keyword>
<comment type="function">
    <text evidence="2 3 7">Regulator of phosphate homeostasis (By similarity). Inhibits renal tubular phosphate transport by reducing SLC34A1 levels (By similarity). Acts directly on the parathyroid to decrease PTH secretion (By similarity). Regulator of vitamin-D metabolism (By similarity). Negatively regulates osteoblasts differentiation and matrix mineralization (By similarity). Up-regulates EGR1 expression in the presence of KL (PubMed:17086194).</text>
</comment>
<comment type="subunit">
    <text evidence="3 7">Interacts with FGFR1 (PubMed:17086194). Interacts with FGFR2, FGFR3 and FGFR4 (By similarity). Affinity between fibroblast growth factors (FGFs) and their receptors is increased by KL and heparan sulfate glycosaminoglycans that function as coreceptors (PubMed:17086194).</text>
</comment>
<comment type="subcellular location">
    <subcellularLocation>
        <location evidence="3">Secreted</location>
    </subcellularLocation>
    <text evidence="3">Secretion is dependent on O-glycosylation.</text>
</comment>
<comment type="tissue specificity">
    <text evidence="6">Mainly expressed in the brain and thymus at low levels. In brain; preferentially expressed in the ventrolateral thalamic nucleus.</text>
</comment>
<comment type="PTM">
    <text evidence="3">Following secretion this protein is inactivated by cleavage into a N-terminal fragment and a C-terminal fragment. The processing is effected by proprotein convertases (By similarity).</text>
</comment>
<comment type="PTM">
    <text evidence="3">O-glycosylated at Thr-171 and Thr-178 by GALNT3 and glycosylation of Thr-178 requires previous glycosylation at Thr171. Glycosylation is necessary for secretion; it blocks processing by proprotein convertases when the O-glycan is alpha 2,6-sialylated. Competition between proprotein convertase cleavage and block of cleavage by O-glycosylation determines the level of secreted active FGF23 (By similarity).</text>
</comment>
<comment type="PTM">
    <text evidence="3">Phosphorylation at Ser-180 mediated by FAM20C slows down glycosylation at Thr-178 notably.</text>
</comment>
<comment type="similarity">
    <text evidence="8">Belongs to the heparin-binding growth factors family.</text>
</comment>